<name>IF2_NOSS1</name>
<comment type="function">
    <text evidence="2">One of the essential components for the initiation of protein synthesis. Protects formylmethionyl-tRNA from spontaneous hydrolysis and promotes its binding to the 30S ribosomal subunits. Also involved in the hydrolysis of GTP during the formation of the 70S ribosomal complex.</text>
</comment>
<comment type="subcellular location">
    <subcellularLocation>
        <location evidence="2">Cytoplasm</location>
    </subcellularLocation>
</comment>
<comment type="similarity">
    <text evidence="2">Belongs to the TRAFAC class translation factor GTPase superfamily. Classic translation factor GTPase family. IF-2 subfamily.</text>
</comment>
<accession>Q8YQJ1</accession>
<proteinExistence type="inferred from homology"/>
<keyword id="KW-0963">Cytoplasm</keyword>
<keyword id="KW-0342">GTP-binding</keyword>
<keyword id="KW-0396">Initiation factor</keyword>
<keyword id="KW-0547">Nucleotide-binding</keyword>
<keyword id="KW-0648">Protein biosynthesis</keyword>
<keyword id="KW-1185">Reference proteome</keyword>
<dbReference type="EMBL" id="BA000019">
    <property type="protein sequence ID" value="BAB75531.1"/>
    <property type="molecule type" value="Genomic_DNA"/>
</dbReference>
<dbReference type="PIR" id="AI2284">
    <property type="entry name" value="AI2284"/>
</dbReference>
<dbReference type="RefSeq" id="WP_010997973.1">
    <property type="nucleotide sequence ID" value="NZ_RSCN01000011.1"/>
</dbReference>
<dbReference type="SMR" id="Q8YQJ1"/>
<dbReference type="STRING" id="103690.gene:10495874"/>
<dbReference type="KEGG" id="ana:alr3832"/>
<dbReference type="eggNOG" id="COG0532">
    <property type="taxonomic scope" value="Bacteria"/>
</dbReference>
<dbReference type="eggNOG" id="COG3266">
    <property type="taxonomic scope" value="Bacteria"/>
</dbReference>
<dbReference type="OrthoDB" id="9811804at2"/>
<dbReference type="Proteomes" id="UP000002483">
    <property type="component" value="Chromosome"/>
</dbReference>
<dbReference type="GO" id="GO:0005829">
    <property type="term" value="C:cytosol"/>
    <property type="evidence" value="ECO:0007669"/>
    <property type="project" value="TreeGrafter"/>
</dbReference>
<dbReference type="GO" id="GO:0005525">
    <property type="term" value="F:GTP binding"/>
    <property type="evidence" value="ECO:0007669"/>
    <property type="project" value="UniProtKB-KW"/>
</dbReference>
<dbReference type="GO" id="GO:0003924">
    <property type="term" value="F:GTPase activity"/>
    <property type="evidence" value="ECO:0007669"/>
    <property type="project" value="UniProtKB-UniRule"/>
</dbReference>
<dbReference type="GO" id="GO:0003743">
    <property type="term" value="F:translation initiation factor activity"/>
    <property type="evidence" value="ECO:0007669"/>
    <property type="project" value="UniProtKB-UniRule"/>
</dbReference>
<dbReference type="CDD" id="cd01887">
    <property type="entry name" value="IF2_eIF5B"/>
    <property type="match status" value="1"/>
</dbReference>
<dbReference type="CDD" id="cd03702">
    <property type="entry name" value="IF2_mtIF2_II"/>
    <property type="match status" value="1"/>
</dbReference>
<dbReference type="CDD" id="cd03692">
    <property type="entry name" value="mtIF2_IVc"/>
    <property type="match status" value="1"/>
</dbReference>
<dbReference type="FunFam" id="2.40.30.10:FF:000007">
    <property type="entry name" value="Translation initiation factor IF-2"/>
    <property type="match status" value="1"/>
</dbReference>
<dbReference type="FunFam" id="2.40.30.10:FF:000008">
    <property type="entry name" value="Translation initiation factor IF-2"/>
    <property type="match status" value="1"/>
</dbReference>
<dbReference type="FunFam" id="3.40.50.10050:FF:000001">
    <property type="entry name" value="Translation initiation factor IF-2"/>
    <property type="match status" value="1"/>
</dbReference>
<dbReference type="FunFam" id="3.40.50.300:FF:000019">
    <property type="entry name" value="Translation initiation factor IF-2"/>
    <property type="match status" value="1"/>
</dbReference>
<dbReference type="Gene3D" id="1.10.10.2480">
    <property type="match status" value="1"/>
</dbReference>
<dbReference type="Gene3D" id="3.40.50.300">
    <property type="entry name" value="P-loop containing nucleotide triphosphate hydrolases"/>
    <property type="match status" value="1"/>
</dbReference>
<dbReference type="Gene3D" id="2.40.30.10">
    <property type="entry name" value="Translation factors"/>
    <property type="match status" value="2"/>
</dbReference>
<dbReference type="Gene3D" id="3.40.50.10050">
    <property type="entry name" value="Translation initiation factor IF- 2, domain 3"/>
    <property type="match status" value="1"/>
</dbReference>
<dbReference type="HAMAP" id="MF_00100_B">
    <property type="entry name" value="IF_2_B"/>
    <property type="match status" value="1"/>
</dbReference>
<dbReference type="InterPro" id="IPR053905">
    <property type="entry name" value="EF-G-like_DII"/>
</dbReference>
<dbReference type="InterPro" id="IPR044145">
    <property type="entry name" value="IF2_II"/>
</dbReference>
<dbReference type="InterPro" id="IPR006847">
    <property type="entry name" value="IF2_N"/>
</dbReference>
<dbReference type="InterPro" id="IPR027417">
    <property type="entry name" value="P-loop_NTPase"/>
</dbReference>
<dbReference type="InterPro" id="IPR005225">
    <property type="entry name" value="Small_GTP-bd"/>
</dbReference>
<dbReference type="InterPro" id="IPR000795">
    <property type="entry name" value="T_Tr_GTP-bd_dom"/>
</dbReference>
<dbReference type="InterPro" id="IPR000178">
    <property type="entry name" value="TF_IF2_bacterial-like"/>
</dbReference>
<dbReference type="InterPro" id="IPR015760">
    <property type="entry name" value="TIF_IF2"/>
</dbReference>
<dbReference type="InterPro" id="IPR023115">
    <property type="entry name" value="TIF_IF2_dom3"/>
</dbReference>
<dbReference type="InterPro" id="IPR036925">
    <property type="entry name" value="TIF_IF2_dom3_sf"/>
</dbReference>
<dbReference type="InterPro" id="IPR009000">
    <property type="entry name" value="Transl_B-barrel_sf"/>
</dbReference>
<dbReference type="NCBIfam" id="TIGR00487">
    <property type="entry name" value="IF-2"/>
    <property type="match status" value="1"/>
</dbReference>
<dbReference type="NCBIfam" id="TIGR00231">
    <property type="entry name" value="small_GTP"/>
    <property type="match status" value="1"/>
</dbReference>
<dbReference type="PANTHER" id="PTHR43381:SF5">
    <property type="entry name" value="TR-TYPE G DOMAIN-CONTAINING PROTEIN"/>
    <property type="match status" value="1"/>
</dbReference>
<dbReference type="PANTHER" id="PTHR43381">
    <property type="entry name" value="TRANSLATION INITIATION FACTOR IF-2-RELATED"/>
    <property type="match status" value="1"/>
</dbReference>
<dbReference type="Pfam" id="PF22042">
    <property type="entry name" value="EF-G_D2"/>
    <property type="match status" value="1"/>
</dbReference>
<dbReference type="Pfam" id="PF00009">
    <property type="entry name" value="GTP_EFTU"/>
    <property type="match status" value="1"/>
</dbReference>
<dbReference type="Pfam" id="PF11987">
    <property type="entry name" value="IF-2"/>
    <property type="match status" value="1"/>
</dbReference>
<dbReference type="Pfam" id="PF04760">
    <property type="entry name" value="IF2_N"/>
    <property type="match status" value="2"/>
</dbReference>
<dbReference type="PRINTS" id="PR00315">
    <property type="entry name" value="ELONGATNFCT"/>
</dbReference>
<dbReference type="SUPFAM" id="SSF52156">
    <property type="entry name" value="Initiation factor IF2/eIF5b, domain 3"/>
    <property type="match status" value="1"/>
</dbReference>
<dbReference type="SUPFAM" id="SSF52540">
    <property type="entry name" value="P-loop containing nucleoside triphosphate hydrolases"/>
    <property type="match status" value="1"/>
</dbReference>
<dbReference type="SUPFAM" id="SSF50447">
    <property type="entry name" value="Translation proteins"/>
    <property type="match status" value="2"/>
</dbReference>
<dbReference type="PROSITE" id="PS51722">
    <property type="entry name" value="G_TR_2"/>
    <property type="match status" value="1"/>
</dbReference>
<dbReference type="PROSITE" id="PS01176">
    <property type="entry name" value="IF2"/>
    <property type="match status" value="1"/>
</dbReference>
<organism>
    <name type="scientific">Nostoc sp. (strain PCC 7120 / SAG 25.82 / UTEX 2576)</name>
    <dbReference type="NCBI Taxonomy" id="103690"/>
    <lineage>
        <taxon>Bacteria</taxon>
        <taxon>Bacillati</taxon>
        <taxon>Cyanobacteriota</taxon>
        <taxon>Cyanophyceae</taxon>
        <taxon>Nostocales</taxon>
        <taxon>Nostocaceae</taxon>
        <taxon>Nostoc</taxon>
    </lineage>
</organism>
<reference key="1">
    <citation type="journal article" date="2001" name="DNA Res.">
        <title>Complete genomic sequence of the filamentous nitrogen-fixing cyanobacterium Anabaena sp. strain PCC 7120.</title>
        <authorList>
            <person name="Kaneko T."/>
            <person name="Nakamura Y."/>
            <person name="Wolk C.P."/>
            <person name="Kuritz T."/>
            <person name="Sasamoto S."/>
            <person name="Watanabe A."/>
            <person name="Iriguchi M."/>
            <person name="Ishikawa A."/>
            <person name="Kawashima K."/>
            <person name="Kimura T."/>
            <person name="Kishida Y."/>
            <person name="Kohara M."/>
            <person name="Matsumoto M."/>
            <person name="Matsuno A."/>
            <person name="Muraki A."/>
            <person name="Nakazaki N."/>
            <person name="Shimpo S."/>
            <person name="Sugimoto M."/>
            <person name="Takazawa M."/>
            <person name="Yamada M."/>
            <person name="Yasuda M."/>
            <person name="Tabata S."/>
        </authorList>
    </citation>
    <scope>NUCLEOTIDE SEQUENCE [LARGE SCALE GENOMIC DNA]</scope>
    <source>
        <strain>PCC 7120 / SAG 25.82 / UTEX 2576</strain>
    </source>
</reference>
<evidence type="ECO:0000250" key="1"/>
<evidence type="ECO:0000255" key="2">
    <source>
        <dbReference type="HAMAP-Rule" id="MF_00100"/>
    </source>
</evidence>
<evidence type="ECO:0000256" key="3">
    <source>
        <dbReference type="SAM" id="MobiDB-lite"/>
    </source>
</evidence>
<sequence length="1039" mass="111596">MNNGKVRIYELSKELNLDNKELLAICDQLNIAVKSHSSTISESEAESIRAAAEKLAATNGTSKKELNATSHKPNSAPAGSRNRPAPPQKQQQILEIRKPKILRNTTSNAPEASVANNQIASSEANSPAPPRPFATPVSPMKPTAPSRPVPRNLSETPQKPAAPEAEPEAQSQAPAKIAVEKPEKSAQPRPGKPERQPKPQLVAPPSRPTAEKLDLSEITGAPGEKPILKRDRPRREDERDQAKPRVAKPAQGETSSAPVQKQARPAQGLVKPEQRVNRPGAPSGDGIRPQRPVRPSADAAPVATPPRGVPGGGRGEAGDTAAIAPDLLDLKRPTPPRLAKGGKKWQEEEIIDEIKEKAGKAGVKGKRVKPLVEDDFEDEDLLDEEGLEIPATVQVSLSIARPPKPKAARSASAATAAPISSPTTRGKRSSHNNRDQNRRQETEVKRERPEKVAVTGAMTVQELADLMAVADTEIVKILFMKGMAVSITQNLDIPTITLVGKELEIEVETAEPEAEARKVTEMIEVGDLEHLLRRPPVVTIMGHVDHGKTTLLDSIRKTKVAAGEAGGITQHIGAYHVDIVHDGKEQQIVFLDTPGHEAFTAMRARGARVTDIAVLVVAADDGVRPQTVEAISHAQAAGVPIVVAINKIDKEGAQPDRVKQELTQYGLTSEEWGGETIMVPVSAIRGENLDTLLEMILLVAEVGELSANPDRNARGTVIEAHLDKAKGAVATLLIQNGTLHVGDILLAGSAFGKVRAMVDDRGRRVDIAGPSFAVEVLGLSDVPAAGDEFEVFDNEKEARALASDRADKQRLSRLLQGRVTLTTLSAQAQEGELKELNLILKGDVQGSVEAIVGSLKQIPQNEVQIRMLLTAAGEITETDIDLAAASGAVIIGFNTTFASGARQAADEAGVDVREYNIIYKLIEDIQGALEGLLEPELVEEPLGQTEVRAVFPVGRGAVAGCYVQSGKLVRNCKVRVRRAGKVIYEGVLDSLKRMKDDAREVNAGYECGIGVDKFHDWAEGDIIESYQMVTKRRTLALTR</sequence>
<protein>
    <recommendedName>
        <fullName evidence="2">Translation initiation factor IF-2</fullName>
    </recommendedName>
</protein>
<gene>
    <name evidence="2" type="primary">infB</name>
    <name type="ordered locus">alr3832</name>
</gene>
<feature type="chain" id="PRO_0000137165" description="Translation initiation factor IF-2">
    <location>
        <begin position="1"/>
        <end position="1039"/>
    </location>
</feature>
<feature type="domain" description="tr-type G">
    <location>
        <begin position="533"/>
        <end position="706"/>
    </location>
</feature>
<feature type="region of interest" description="Disordered" evidence="3">
    <location>
        <begin position="39"/>
        <end position="347"/>
    </location>
</feature>
<feature type="region of interest" description="Disordered" evidence="3">
    <location>
        <begin position="400"/>
        <end position="452"/>
    </location>
</feature>
<feature type="region of interest" description="G1" evidence="1">
    <location>
        <begin position="542"/>
        <end position="549"/>
    </location>
</feature>
<feature type="region of interest" description="G2" evidence="1">
    <location>
        <begin position="567"/>
        <end position="571"/>
    </location>
</feature>
<feature type="region of interest" description="G3" evidence="1">
    <location>
        <begin position="592"/>
        <end position="595"/>
    </location>
</feature>
<feature type="region of interest" description="G4" evidence="1">
    <location>
        <begin position="646"/>
        <end position="649"/>
    </location>
</feature>
<feature type="region of interest" description="G5" evidence="1">
    <location>
        <begin position="682"/>
        <end position="684"/>
    </location>
</feature>
<feature type="compositionally biased region" description="Polar residues" evidence="3">
    <location>
        <begin position="103"/>
        <end position="125"/>
    </location>
</feature>
<feature type="compositionally biased region" description="Low complexity" evidence="3">
    <location>
        <begin position="157"/>
        <end position="176"/>
    </location>
</feature>
<feature type="compositionally biased region" description="Basic and acidic residues" evidence="3">
    <location>
        <begin position="178"/>
        <end position="197"/>
    </location>
</feature>
<feature type="compositionally biased region" description="Basic and acidic residues" evidence="3">
    <location>
        <begin position="226"/>
        <end position="243"/>
    </location>
</feature>
<feature type="compositionally biased region" description="Low complexity" evidence="3">
    <location>
        <begin position="408"/>
        <end position="423"/>
    </location>
</feature>
<feature type="compositionally biased region" description="Basic and acidic residues" evidence="3">
    <location>
        <begin position="432"/>
        <end position="451"/>
    </location>
</feature>
<feature type="binding site" evidence="2">
    <location>
        <begin position="542"/>
        <end position="549"/>
    </location>
    <ligand>
        <name>GTP</name>
        <dbReference type="ChEBI" id="CHEBI:37565"/>
    </ligand>
</feature>
<feature type="binding site" evidence="2">
    <location>
        <begin position="592"/>
        <end position="596"/>
    </location>
    <ligand>
        <name>GTP</name>
        <dbReference type="ChEBI" id="CHEBI:37565"/>
    </ligand>
</feature>
<feature type="binding site" evidence="2">
    <location>
        <begin position="646"/>
        <end position="649"/>
    </location>
    <ligand>
        <name>GTP</name>
        <dbReference type="ChEBI" id="CHEBI:37565"/>
    </ligand>
</feature>